<feature type="chain" id="PRO_0000377142" description="tRNA dimethylallyltransferase">
    <location>
        <begin position="1"/>
        <end position="314"/>
    </location>
</feature>
<feature type="region of interest" description="Interaction with substrate tRNA" evidence="1">
    <location>
        <begin position="34"/>
        <end position="37"/>
    </location>
</feature>
<feature type="binding site" evidence="1">
    <location>
        <begin position="9"/>
        <end position="16"/>
    </location>
    <ligand>
        <name>ATP</name>
        <dbReference type="ChEBI" id="CHEBI:30616"/>
    </ligand>
</feature>
<feature type="binding site" evidence="1">
    <location>
        <begin position="11"/>
        <end position="16"/>
    </location>
    <ligand>
        <name>substrate</name>
    </ligand>
</feature>
<feature type="site" description="Interaction with substrate tRNA" evidence="1">
    <location>
        <position position="100"/>
    </location>
</feature>
<feature type="site" description="Interaction with substrate tRNA" evidence="1">
    <location>
        <position position="122"/>
    </location>
</feature>
<gene>
    <name evidence="1" type="primary">miaA</name>
    <name type="ordered locus">Dhaf_2730</name>
</gene>
<evidence type="ECO:0000255" key="1">
    <source>
        <dbReference type="HAMAP-Rule" id="MF_00185"/>
    </source>
</evidence>
<proteinExistence type="inferred from homology"/>
<name>MIAA_DESHD</name>
<keyword id="KW-0067">ATP-binding</keyword>
<keyword id="KW-0460">Magnesium</keyword>
<keyword id="KW-0547">Nucleotide-binding</keyword>
<keyword id="KW-0808">Transferase</keyword>
<keyword id="KW-0819">tRNA processing</keyword>
<protein>
    <recommendedName>
        <fullName evidence="1">tRNA dimethylallyltransferase</fullName>
        <ecNumber evidence="1">2.5.1.75</ecNumber>
    </recommendedName>
    <alternativeName>
        <fullName evidence="1">Dimethylallyl diphosphate:tRNA dimethylallyltransferase</fullName>
        <shortName evidence="1">DMAPP:tRNA dimethylallyltransferase</shortName>
        <shortName evidence="1">DMATase</shortName>
    </alternativeName>
    <alternativeName>
        <fullName evidence="1">Isopentenyl-diphosphate:tRNA isopentenyltransferase</fullName>
        <shortName evidence="1">IPP transferase</shortName>
        <shortName evidence="1">IPPT</shortName>
        <shortName evidence="1">IPTase</shortName>
    </alternativeName>
</protein>
<organism>
    <name type="scientific">Desulfitobacterium hafniense (strain DSM 10664 / DCB-2)</name>
    <dbReference type="NCBI Taxonomy" id="272564"/>
    <lineage>
        <taxon>Bacteria</taxon>
        <taxon>Bacillati</taxon>
        <taxon>Bacillota</taxon>
        <taxon>Clostridia</taxon>
        <taxon>Eubacteriales</taxon>
        <taxon>Desulfitobacteriaceae</taxon>
        <taxon>Desulfitobacterium</taxon>
    </lineage>
</organism>
<dbReference type="EC" id="2.5.1.75" evidence="1"/>
<dbReference type="EMBL" id="CP001336">
    <property type="protein sequence ID" value="ACL20756.1"/>
    <property type="molecule type" value="Genomic_DNA"/>
</dbReference>
<dbReference type="RefSeq" id="WP_015944193.1">
    <property type="nucleotide sequence ID" value="NC_011830.1"/>
</dbReference>
<dbReference type="SMR" id="B8FWE4"/>
<dbReference type="KEGG" id="dhd:Dhaf_2730"/>
<dbReference type="HOGENOM" id="CLU_032616_0_1_9"/>
<dbReference type="Proteomes" id="UP000007726">
    <property type="component" value="Chromosome"/>
</dbReference>
<dbReference type="GO" id="GO:0005524">
    <property type="term" value="F:ATP binding"/>
    <property type="evidence" value="ECO:0007669"/>
    <property type="project" value="UniProtKB-UniRule"/>
</dbReference>
<dbReference type="GO" id="GO:0052381">
    <property type="term" value="F:tRNA dimethylallyltransferase activity"/>
    <property type="evidence" value="ECO:0007669"/>
    <property type="project" value="UniProtKB-UniRule"/>
</dbReference>
<dbReference type="GO" id="GO:0006400">
    <property type="term" value="P:tRNA modification"/>
    <property type="evidence" value="ECO:0007669"/>
    <property type="project" value="TreeGrafter"/>
</dbReference>
<dbReference type="Gene3D" id="1.10.20.140">
    <property type="match status" value="1"/>
</dbReference>
<dbReference type="Gene3D" id="3.40.50.300">
    <property type="entry name" value="P-loop containing nucleotide triphosphate hydrolases"/>
    <property type="match status" value="1"/>
</dbReference>
<dbReference type="HAMAP" id="MF_00185">
    <property type="entry name" value="IPP_trans"/>
    <property type="match status" value="1"/>
</dbReference>
<dbReference type="InterPro" id="IPR039657">
    <property type="entry name" value="Dimethylallyltransferase"/>
</dbReference>
<dbReference type="InterPro" id="IPR018022">
    <property type="entry name" value="IPT"/>
</dbReference>
<dbReference type="InterPro" id="IPR027417">
    <property type="entry name" value="P-loop_NTPase"/>
</dbReference>
<dbReference type="NCBIfam" id="TIGR00174">
    <property type="entry name" value="miaA"/>
    <property type="match status" value="1"/>
</dbReference>
<dbReference type="PANTHER" id="PTHR11088">
    <property type="entry name" value="TRNA DIMETHYLALLYLTRANSFERASE"/>
    <property type="match status" value="1"/>
</dbReference>
<dbReference type="PANTHER" id="PTHR11088:SF60">
    <property type="entry name" value="TRNA DIMETHYLALLYLTRANSFERASE"/>
    <property type="match status" value="1"/>
</dbReference>
<dbReference type="Pfam" id="PF01715">
    <property type="entry name" value="IPPT"/>
    <property type="match status" value="1"/>
</dbReference>
<dbReference type="SUPFAM" id="SSF52540">
    <property type="entry name" value="P-loop containing nucleoside triphosphate hydrolases"/>
    <property type="match status" value="2"/>
</dbReference>
<accession>B8FWE4</accession>
<comment type="function">
    <text evidence="1">Catalyzes the transfer of a dimethylallyl group onto the adenine at position 37 in tRNAs that read codons beginning with uridine, leading to the formation of N6-(dimethylallyl)adenosine (i(6)A).</text>
</comment>
<comment type="catalytic activity">
    <reaction evidence="1">
        <text>adenosine(37) in tRNA + dimethylallyl diphosphate = N(6)-dimethylallyladenosine(37) in tRNA + diphosphate</text>
        <dbReference type="Rhea" id="RHEA:26482"/>
        <dbReference type="Rhea" id="RHEA-COMP:10162"/>
        <dbReference type="Rhea" id="RHEA-COMP:10375"/>
        <dbReference type="ChEBI" id="CHEBI:33019"/>
        <dbReference type="ChEBI" id="CHEBI:57623"/>
        <dbReference type="ChEBI" id="CHEBI:74411"/>
        <dbReference type="ChEBI" id="CHEBI:74415"/>
        <dbReference type="EC" id="2.5.1.75"/>
    </reaction>
</comment>
<comment type="cofactor">
    <cofactor evidence="1">
        <name>Mg(2+)</name>
        <dbReference type="ChEBI" id="CHEBI:18420"/>
    </cofactor>
</comment>
<comment type="subunit">
    <text evidence="1">Monomer.</text>
</comment>
<comment type="similarity">
    <text evidence="1">Belongs to the IPP transferase family.</text>
</comment>
<reference key="1">
    <citation type="journal article" date="2012" name="BMC Microbiol.">
        <title>Genome sequence of Desulfitobacterium hafniense DCB-2, a Gram-positive anaerobe capable of dehalogenation and metal reduction.</title>
        <authorList>
            <person name="Kim S.H."/>
            <person name="Harzman C."/>
            <person name="Davis J.K."/>
            <person name="Hutcheson R."/>
            <person name="Broderick J.B."/>
            <person name="Marsh T.L."/>
            <person name="Tiedje J.M."/>
        </authorList>
    </citation>
    <scope>NUCLEOTIDE SEQUENCE [LARGE SCALE GENOMIC DNA]</scope>
    <source>
        <strain>DSM 10664 / DCB-2</strain>
    </source>
</reference>
<sequence>MKPLIIIVGPTAVGKTALGVALAQALQGEIISGDSVQVYRKLDIGSAKPTLAEQGNVPHYLLDALDPAEPFTVAQFQTLANQSIQNIQSRGKVPIVVGGTGLYIRSLIDPFQFAEHGSESIRSFWTAFLSEQGKEALHRELAKRDPLSAQRLHPNDTVRIIRALEMCQLTGKPFSEIRGNQDMNYPPLPPSLLYVGLTAPREIIYERINRRCEQMVAAGLIEETHNLIKEGYSPKLKPLQSIGYRHALLYLYGKVTLPEMMRIFQRDTRHFAKRQLTWFRRDPRVVWYDTYSGNLTNILESLIGTCSGMESRVE</sequence>